<accession>B2GJ15</accession>
<evidence type="ECO:0000255" key="1">
    <source>
        <dbReference type="HAMAP-Rule" id="MF_01849"/>
    </source>
</evidence>
<evidence type="ECO:0000255" key="2">
    <source>
        <dbReference type="PROSITE-ProRule" id="PRU01266"/>
    </source>
</evidence>
<dbReference type="EC" id="2.1.1.192" evidence="1"/>
<dbReference type="EMBL" id="AP009152">
    <property type="protein sequence ID" value="BAG28985.1"/>
    <property type="molecule type" value="Genomic_DNA"/>
</dbReference>
<dbReference type="RefSeq" id="WP_012397710.1">
    <property type="nucleotide sequence ID" value="NC_010617.1"/>
</dbReference>
<dbReference type="SMR" id="B2GJ15"/>
<dbReference type="STRING" id="378753.KRH_06380"/>
<dbReference type="KEGG" id="krh:KRH_06380"/>
<dbReference type="eggNOG" id="COG0820">
    <property type="taxonomic scope" value="Bacteria"/>
</dbReference>
<dbReference type="HOGENOM" id="CLU_029101_0_2_11"/>
<dbReference type="OrthoDB" id="9793973at2"/>
<dbReference type="Proteomes" id="UP000008838">
    <property type="component" value="Chromosome"/>
</dbReference>
<dbReference type="GO" id="GO:0005737">
    <property type="term" value="C:cytoplasm"/>
    <property type="evidence" value="ECO:0007669"/>
    <property type="project" value="UniProtKB-SubCell"/>
</dbReference>
<dbReference type="GO" id="GO:0051539">
    <property type="term" value="F:4 iron, 4 sulfur cluster binding"/>
    <property type="evidence" value="ECO:0007669"/>
    <property type="project" value="UniProtKB-UniRule"/>
</dbReference>
<dbReference type="GO" id="GO:0046872">
    <property type="term" value="F:metal ion binding"/>
    <property type="evidence" value="ECO:0007669"/>
    <property type="project" value="UniProtKB-KW"/>
</dbReference>
<dbReference type="GO" id="GO:0070040">
    <property type="term" value="F:rRNA (adenine(2503)-C2-)-methyltransferase activity"/>
    <property type="evidence" value="ECO:0007669"/>
    <property type="project" value="UniProtKB-UniRule"/>
</dbReference>
<dbReference type="GO" id="GO:0019843">
    <property type="term" value="F:rRNA binding"/>
    <property type="evidence" value="ECO:0007669"/>
    <property type="project" value="UniProtKB-UniRule"/>
</dbReference>
<dbReference type="GO" id="GO:0002935">
    <property type="term" value="F:tRNA (adenine(37)-C2)-methyltransferase activity"/>
    <property type="evidence" value="ECO:0007669"/>
    <property type="project" value="UniProtKB-UniRule"/>
</dbReference>
<dbReference type="GO" id="GO:0000049">
    <property type="term" value="F:tRNA binding"/>
    <property type="evidence" value="ECO:0007669"/>
    <property type="project" value="UniProtKB-UniRule"/>
</dbReference>
<dbReference type="GO" id="GO:0070475">
    <property type="term" value="P:rRNA base methylation"/>
    <property type="evidence" value="ECO:0007669"/>
    <property type="project" value="UniProtKB-UniRule"/>
</dbReference>
<dbReference type="GO" id="GO:0030488">
    <property type="term" value="P:tRNA methylation"/>
    <property type="evidence" value="ECO:0007669"/>
    <property type="project" value="UniProtKB-UniRule"/>
</dbReference>
<dbReference type="CDD" id="cd01335">
    <property type="entry name" value="Radical_SAM"/>
    <property type="match status" value="1"/>
</dbReference>
<dbReference type="FunFam" id="3.20.20.70:FF:000014">
    <property type="entry name" value="Probable dual-specificity RNA methyltransferase RlmN"/>
    <property type="match status" value="1"/>
</dbReference>
<dbReference type="Gene3D" id="1.10.150.530">
    <property type="match status" value="1"/>
</dbReference>
<dbReference type="Gene3D" id="3.20.20.70">
    <property type="entry name" value="Aldolase class I"/>
    <property type="match status" value="1"/>
</dbReference>
<dbReference type="HAMAP" id="MF_01849">
    <property type="entry name" value="RNA_methyltr_RlmN"/>
    <property type="match status" value="1"/>
</dbReference>
<dbReference type="InterPro" id="IPR013785">
    <property type="entry name" value="Aldolase_TIM"/>
</dbReference>
<dbReference type="InterPro" id="IPR040072">
    <property type="entry name" value="Methyltransferase_A"/>
</dbReference>
<dbReference type="InterPro" id="IPR027492">
    <property type="entry name" value="RNA_MTrfase_RlmN"/>
</dbReference>
<dbReference type="InterPro" id="IPR004383">
    <property type="entry name" value="rRNA_lsu_MTrfase_RlmN/Cfr"/>
</dbReference>
<dbReference type="InterPro" id="IPR007197">
    <property type="entry name" value="rSAM"/>
</dbReference>
<dbReference type="NCBIfam" id="TIGR00048">
    <property type="entry name" value="rRNA_mod_RlmN"/>
    <property type="match status" value="1"/>
</dbReference>
<dbReference type="PANTHER" id="PTHR30544">
    <property type="entry name" value="23S RRNA METHYLTRANSFERASE"/>
    <property type="match status" value="1"/>
</dbReference>
<dbReference type="PANTHER" id="PTHR30544:SF5">
    <property type="entry name" value="RADICAL SAM CORE DOMAIN-CONTAINING PROTEIN"/>
    <property type="match status" value="1"/>
</dbReference>
<dbReference type="Pfam" id="PF04055">
    <property type="entry name" value="Radical_SAM"/>
    <property type="match status" value="1"/>
</dbReference>
<dbReference type="PIRSF" id="PIRSF006004">
    <property type="entry name" value="CHP00048"/>
    <property type="match status" value="1"/>
</dbReference>
<dbReference type="SFLD" id="SFLDF00275">
    <property type="entry name" value="adenosine_C2_methyltransferase"/>
    <property type="match status" value="1"/>
</dbReference>
<dbReference type="SFLD" id="SFLDS00029">
    <property type="entry name" value="Radical_SAM"/>
    <property type="match status" value="1"/>
</dbReference>
<dbReference type="SUPFAM" id="SSF102114">
    <property type="entry name" value="Radical SAM enzymes"/>
    <property type="match status" value="1"/>
</dbReference>
<dbReference type="PROSITE" id="PS51918">
    <property type="entry name" value="RADICAL_SAM"/>
    <property type="match status" value="1"/>
</dbReference>
<reference key="1">
    <citation type="journal article" date="2008" name="J. Bacteriol.">
        <title>Complete genome sequence of the soil actinomycete Kocuria rhizophila.</title>
        <authorList>
            <person name="Takarada H."/>
            <person name="Sekine M."/>
            <person name="Kosugi H."/>
            <person name="Matsuo Y."/>
            <person name="Fujisawa T."/>
            <person name="Omata S."/>
            <person name="Kishi E."/>
            <person name="Shimizu A."/>
            <person name="Tsukatani N."/>
            <person name="Tanikawa S."/>
            <person name="Fujita N."/>
            <person name="Harayama S."/>
        </authorList>
    </citation>
    <scope>NUCLEOTIDE SEQUENCE [LARGE SCALE GENOMIC DNA]</scope>
    <source>
        <strain>ATCC 9341 / DSM 348 / NBRC 103217 / DC2201</strain>
    </source>
</reference>
<proteinExistence type="inferred from homology"/>
<name>RLMN_KOCRD</name>
<protein>
    <recommendedName>
        <fullName evidence="1">Probable dual-specificity RNA methyltransferase RlmN</fullName>
        <ecNumber evidence="1">2.1.1.192</ecNumber>
    </recommendedName>
    <alternativeName>
        <fullName evidence="1">23S rRNA (adenine(2503)-C(2))-methyltransferase</fullName>
    </alternativeName>
    <alternativeName>
        <fullName evidence="1">23S rRNA m2A2503 methyltransferase</fullName>
    </alternativeName>
    <alternativeName>
        <fullName evidence="1">Ribosomal RNA large subunit methyltransferase N</fullName>
    </alternativeName>
    <alternativeName>
        <fullName evidence="1">tRNA (adenine(37)-C(2))-methyltransferase</fullName>
    </alternativeName>
    <alternativeName>
        <fullName evidence="1">tRNA m2A37 methyltransferase</fullName>
    </alternativeName>
</protein>
<comment type="function">
    <text evidence="1">Specifically methylates position 2 of adenine 2503 in 23S rRNA and position 2 of adenine 37 in tRNAs.</text>
</comment>
<comment type="catalytic activity">
    <reaction evidence="1">
        <text>adenosine(2503) in 23S rRNA + 2 reduced [2Fe-2S]-[ferredoxin] + 2 S-adenosyl-L-methionine = 2-methyladenosine(2503) in 23S rRNA + 5'-deoxyadenosine + L-methionine + 2 oxidized [2Fe-2S]-[ferredoxin] + S-adenosyl-L-homocysteine</text>
        <dbReference type="Rhea" id="RHEA:42916"/>
        <dbReference type="Rhea" id="RHEA-COMP:10000"/>
        <dbReference type="Rhea" id="RHEA-COMP:10001"/>
        <dbReference type="Rhea" id="RHEA-COMP:10152"/>
        <dbReference type="Rhea" id="RHEA-COMP:10282"/>
        <dbReference type="ChEBI" id="CHEBI:17319"/>
        <dbReference type="ChEBI" id="CHEBI:33737"/>
        <dbReference type="ChEBI" id="CHEBI:33738"/>
        <dbReference type="ChEBI" id="CHEBI:57844"/>
        <dbReference type="ChEBI" id="CHEBI:57856"/>
        <dbReference type="ChEBI" id="CHEBI:59789"/>
        <dbReference type="ChEBI" id="CHEBI:74411"/>
        <dbReference type="ChEBI" id="CHEBI:74497"/>
        <dbReference type="EC" id="2.1.1.192"/>
    </reaction>
</comment>
<comment type="catalytic activity">
    <reaction evidence="1">
        <text>adenosine(37) in tRNA + 2 reduced [2Fe-2S]-[ferredoxin] + 2 S-adenosyl-L-methionine = 2-methyladenosine(37) in tRNA + 5'-deoxyadenosine + L-methionine + 2 oxidized [2Fe-2S]-[ferredoxin] + S-adenosyl-L-homocysteine</text>
        <dbReference type="Rhea" id="RHEA:43332"/>
        <dbReference type="Rhea" id="RHEA-COMP:10000"/>
        <dbReference type="Rhea" id="RHEA-COMP:10001"/>
        <dbReference type="Rhea" id="RHEA-COMP:10162"/>
        <dbReference type="Rhea" id="RHEA-COMP:10485"/>
        <dbReference type="ChEBI" id="CHEBI:17319"/>
        <dbReference type="ChEBI" id="CHEBI:33737"/>
        <dbReference type="ChEBI" id="CHEBI:33738"/>
        <dbReference type="ChEBI" id="CHEBI:57844"/>
        <dbReference type="ChEBI" id="CHEBI:57856"/>
        <dbReference type="ChEBI" id="CHEBI:59789"/>
        <dbReference type="ChEBI" id="CHEBI:74411"/>
        <dbReference type="ChEBI" id="CHEBI:74497"/>
        <dbReference type="EC" id="2.1.1.192"/>
    </reaction>
</comment>
<comment type="cofactor">
    <cofactor evidence="1">
        <name>[4Fe-4S] cluster</name>
        <dbReference type="ChEBI" id="CHEBI:49883"/>
    </cofactor>
    <text evidence="1">Binds 1 [4Fe-4S] cluster. The cluster is coordinated with 3 cysteines and an exchangeable S-adenosyl-L-methionine.</text>
</comment>
<comment type="subcellular location">
    <subcellularLocation>
        <location evidence="1">Cytoplasm</location>
    </subcellularLocation>
</comment>
<comment type="miscellaneous">
    <text evidence="1">Reaction proceeds by a ping-pong mechanism involving intermediate methylation of a conserved cysteine residue.</text>
</comment>
<comment type="similarity">
    <text evidence="1">Belongs to the radical SAM superfamily. RlmN family.</text>
</comment>
<feature type="chain" id="PRO_0000350221" description="Probable dual-specificity RNA methyltransferase RlmN">
    <location>
        <begin position="1"/>
        <end position="382"/>
    </location>
</feature>
<feature type="domain" description="Radical SAM core" evidence="2">
    <location>
        <begin position="124"/>
        <end position="370"/>
    </location>
</feature>
<feature type="active site" description="Proton acceptor" evidence="1">
    <location>
        <position position="118"/>
    </location>
</feature>
<feature type="active site" description="S-methylcysteine intermediate" evidence="1">
    <location>
        <position position="375"/>
    </location>
</feature>
<feature type="binding site" evidence="1">
    <location>
        <position position="138"/>
    </location>
    <ligand>
        <name>[4Fe-4S] cluster</name>
        <dbReference type="ChEBI" id="CHEBI:49883"/>
        <note>4Fe-4S-S-AdoMet</note>
    </ligand>
</feature>
<feature type="binding site" evidence="1">
    <location>
        <position position="142"/>
    </location>
    <ligand>
        <name>[4Fe-4S] cluster</name>
        <dbReference type="ChEBI" id="CHEBI:49883"/>
        <note>4Fe-4S-S-AdoMet</note>
    </ligand>
</feature>
<feature type="binding site" evidence="1">
    <location>
        <position position="145"/>
    </location>
    <ligand>
        <name>[4Fe-4S] cluster</name>
        <dbReference type="ChEBI" id="CHEBI:49883"/>
        <note>4Fe-4S-S-AdoMet</note>
    </ligand>
</feature>
<feature type="binding site" evidence="1">
    <location>
        <begin position="196"/>
        <end position="197"/>
    </location>
    <ligand>
        <name>S-adenosyl-L-methionine</name>
        <dbReference type="ChEBI" id="CHEBI:59789"/>
    </ligand>
</feature>
<feature type="binding site" evidence="1">
    <location>
        <position position="230"/>
    </location>
    <ligand>
        <name>S-adenosyl-L-methionine</name>
        <dbReference type="ChEBI" id="CHEBI:59789"/>
    </ligand>
</feature>
<feature type="binding site" evidence="1">
    <location>
        <begin position="253"/>
        <end position="255"/>
    </location>
    <ligand>
        <name>S-adenosyl-L-methionine</name>
        <dbReference type="ChEBI" id="CHEBI:59789"/>
    </ligand>
</feature>
<feature type="binding site" evidence="1">
    <location>
        <position position="332"/>
    </location>
    <ligand>
        <name>S-adenosyl-L-methionine</name>
        <dbReference type="ChEBI" id="CHEBI:59789"/>
    </ligand>
</feature>
<feature type="disulfide bond" description="(transient)" evidence="1">
    <location>
        <begin position="131"/>
        <end position="375"/>
    </location>
</feature>
<gene>
    <name evidence="1" type="primary">rlmN</name>
    <name type="ordered locus">KRH_06380</name>
</gene>
<sequence length="382" mass="41813">MTTTPVEITPRPETGQLVFKPARRGKPPLHLADFDMAGRKEFLRAAGYPAFRASQLSKHYFERFEADPAAMTDLPAGQREELVAKAMPPLLKTVRQLRADEGMTVKSVHRLFDNAMVESVLMRYDKRVTMCISSQAGCGMNCPFCATGQSGLTRNLSAAEIVDQVVQGVRALRDGAVGDPEEAPQRVSNIVFMGMGEALANYKATMGAVHRIIDPSPEGLGISARGLTMSTVGLVPGIRKFTLEKLPITLALSLHAPDDELRDELIPINTRWKVDEALDAARDYYDATGRRVSIEYALIRDINDQGWRADLLGEKLNKRGGGWVHVNPIPLNPTPGSKWTASRPGVEQNFVERLRAHGIPTTVRDTRGSDIDGACGQLATEA</sequence>
<organism>
    <name type="scientific">Kocuria rhizophila (strain ATCC 9341 / DSM 348 / NBRC 103217 / DC2201)</name>
    <dbReference type="NCBI Taxonomy" id="378753"/>
    <lineage>
        <taxon>Bacteria</taxon>
        <taxon>Bacillati</taxon>
        <taxon>Actinomycetota</taxon>
        <taxon>Actinomycetes</taxon>
        <taxon>Micrococcales</taxon>
        <taxon>Micrococcaceae</taxon>
        <taxon>Kocuria</taxon>
    </lineage>
</organism>
<keyword id="KW-0004">4Fe-4S</keyword>
<keyword id="KW-0963">Cytoplasm</keyword>
<keyword id="KW-1015">Disulfide bond</keyword>
<keyword id="KW-0408">Iron</keyword>
<keyword id="KW-0411">Iron-sulfur</keyword>
<keyword id="KW-0479">Metal-binding</keyword>
<keyword id="KW-0489">Methyltransferase</keyword>
<keyword id="KW-1185">Reference proteome</keyword>
<keyword id="KW-0698">rRNA processing</keyword>
<keyword id="KW-0949">S-adenosyl-L-methionine</keyword>
<keyword id="KW-0808">Transferase</keyword>
<keyword id="KW-0819">tRNA processing</keyword>